<feature type="chain" id="PRO_0000178698" description="Transcriptional repressor protein KorB">
    <location>
        <begin position="1"/>
        <end position="349"/>
    </location>
</feature>
<feature type="region of interest" description="Disordered" evidence="1">
    <location>
        <begin position="1"/>
        <end position="72"/>
    </location>
</feature>
<feature type="region of interest" description="Disordered" evidence="1">
    <location>
        <begin position="246"/>
        <end position="296"/>
    </location>
</feature>
<feature type="compositionally biased region" description="Low complexity" evidence="1">
    <location>
        <begin position="25"/>
        <end position="40"/>
    </location>
</feature>
<feature type="compositionally biased region" description="Basic and acidic residues" evidence="1">
    <location>
        <begin position="246"/>
        <end position="256"/>
    </location>
</feature>
<feature type="compositionally biased region" description="Basic and acidic residues" evidence="1">
    <location>
        <begin position="279"/>
        <end position="296"/>
    </location>
</feature>
<keyword id="KW-0238">DNA-binding</keyword>
<keyword id="KW-0614">Plasmid</keyword>
<keyword id="KW-0678">Repressor</keyword>
<keyword id="KW-0804">Transcription</keyword>
<keyword id="KW-0805">Transcription regulation</keyword>
<name>KORB1_ECOLX</name>
<organism>
    <name type="scientific">Escherichia coli</name>
    <dbReference type="NCBI Taxonomy" id="562"/>
    <lineage>
        <taxon>Bacteria</taxon>
        <taxon>Pseudomonadati</taxon>
        <taxon>Pseudomonadota</taxon>
        <taxon>Gammaproteobacteria</taxon>
        <taxon>Enterobacterales</taxon>
        <taxon>Enterobacteriaceae</taxon>
        <taxon>Escherichia</taxon>
    </lineage>
</organism>
<sequence>MSAKTNAKKKEQDKPQSSGLGLDGLGDLAGLLNEQPAANAGGAGPQELPLDLIDEDPHQPRTADNPGFSPESIAEIGETIKARGVKSPISVRENPDAPGRYLINHGARRYRGSKWAHKTTIPAFIDNDYNEADQVIENLQRNELTAREIADFIGRELAKGKKKGEIAKEIGKSPAFVTQHVTLLDLPEPIAEAFNSGRGKDVTVINELVTAYKKNPDEVAAWLADDSQELTRGSVKLLREFLEDKRSHDDGDRDPNTVDALTGKTDAEAGDGEQGPQDDDAKGKKEPKEADPDKLKKAIIQVKHDDRPARLILNRRPPAEGWAWLKYEDDGQEFEADLGTVQLVALLEG</sequence>
<dbReference type="EMBL" id="U67194">
    <property type="protein sequence ID" value="AAC64419.1"/>
    <property type="molecule type" value="Genomic_DNA"/>
</dbReference>
<dbReference type="SMR" id="Q52313"/>
<dbReference type="GO" id="GO:0005694">
    <property type="term" value="C:chromosome"/>
    <property type="evidence" value="ECO:0007669"/>
    <property type="project" value="TreeGrafter"/>
</dbReference>
<dbReference type="GO" id="GO:0003677">
    <property type="term" value="F:DNA binding"/>
    <property type="evidence" value="ECO:0007669"/>
    <property type="project" value="UniProtKB-KW"/>
</dbReference>
<dbReference type="GO" id="GO:0007059">
    <property type="term" value="P:chromosome segregation"/>
    <property type="evidence" value="ECO:0007669"/>
    <property type="project" value="TreeGrafter"/>
</dbReference>
<dbReference type="GO" id="GO:0045892">
    <property type="term" value="P:negative regulation of DNA-templated transcription"/>
    <property type="evidence" value="ECO:0007669"/>
    <property type="project" value="InterPro"/>
</dbReference>
<dbReference type="CDD" id="cd16398">
    <property type="entry name" value="KorB_N_like"/>
    <property type="match status" value="1"/>
</dbReference>
<dbReference type="FunFam" id="1.10.10.730:FF:000001">
    <property type="entry name" value="Transcriptional repressor protein KorB"/>
    <property type="match status" value="1"/>
</dbReference>
<dbReference type="Gene3D" id="3.90.1530.30">
    <property type="match status" value="1"/>
</dbReference>
<dbReference type="Gene3D" id="6.10.250.140">
    <property type="match status" value="1"/>
</dbReference>
<dbReference type="Gene3D" id="1.10.10.730">
    <property type="entry name" value="KorB DNA-binding domain"/>
    <property type="match status" value="1"/>
</dbReference>
<dbReference type="Gene3D" id="2.30.30.150">
    <property type="entry name" value="KorB, C-terminal domain"/>
    <property type="match status" value="1"/>
</dbReference>
<dbReference type="InterPro" id="IPR050336">
    <property type="entry name" value="Chromosome_partition/occlusion"/>
</dbReference>
<dbReference type="InterPro" id="IPR010575">
    <property type="entry name" value="KorB_C"/>
</dbReference>
<dbReference type="InterPro" id="IPR037048">
    <property type="entry name" value="KorB_C_sf"/>
</dbReference>
<dbReference type="InterPro" id="IPR042075">
    <property type="entry name" value="KorB_DNA-db"/>
</dbReference>
<dbReference type="InterPro" id="IPR013741">
    <property type="entry name" value="KorB_domain"/>
</dbReference>
<dbReference type="InterPro" id="IPR004437">
    <property type="entry name" value="ParB/RepB/Spo0J"/>
</dbReference>
<dbReference type="InterPro" id="IPR003115">
    <property type="entry name" value="ParB/Sulfiredoxin_dom"/>
</dbReference>
<dbReference type="InterPro" id="IPR036086">
    <property type="entry name" value="ParB/Sulfiredoxin_sf"/>
</dbReference>
<dbReference type="InterPro" id="IPR008988">
    <property type="entry name" value="Transcriptional_repressor_C"/>
</dbReference>
<dbReference type="NCBIfam" id="TIGR00180">
    <property type="entry name" value="parB_part"/>
    <property type="match status" value="1"/>
</dbReference>
<dbReference type="PANTHER" id="PTHR33375">
    <property type="entry name" value="CHROMOSOME-PARTITIONING PROTEIN PARB-RELATED"/>
    <property type="match status" value="1"/>
</dbReference>
<dbReference type="PANTHER" id="PTHR33375:SF1">
    <property type="entry name" value="CHROMOSOME-PARTITIONING PROTEIN PARB-RELATED"/>
    <property type="match status" value="1"/>
</dbReference>
<dbReference type="Pfam" id="PF08535">
    <property type="entry name" value="KorB"/>
    <property type="match status" value="1"/>
</dbReference>
<dbReference type="Pfam" id="PF06613">
    <property type="entry name" value="KorB_C"/>
    <property type="match status" value="1"/>
</dbReference>
<dbReference type="Pfam" id="PF02195">
    <property type="entry name" value="ParBc"/>
    <property type="match status" value="1"/>
</dbReference>
<dbReference type="SMART" id="SM00470">
    <property type="entry name" value="ParB"/>
    <property type="match status" value="1"/>
</dbReference>
<dbReference type="SUPFAM" id="SSF50037">
    <property type="entry name" value="C-terminal domain of transcriptional repressors"/>
    <property type="match status" value="1"/>
</dbReference>
<dbReference type="SUPFAM" id="SSF109709">
    <property type="entry name" value="KorB DNA-binding domain-like"/>
    <property type="match status" value="1"/>
</dbReference>
<dbReference type="SUPFAM" id="SSF110849">
    <property type="entry name" value="ParB/Sulfiredoxin"/>
    <property type="match status" value="1"/>
</dbReference>
<gene>
    <name type="primary">korB</name>
</gene>
<evidence type="ECO:0000256" key="1">
    <source>
        <dbReference type="SAM" id="MobiDB-lite"/>
    </source>
</evidence>
<evidence type="ECO:0000305" key="2"/>
<geneLocation type="plasmid">
    <name>IncP-beta R751</name>
</geneLocation>
<proteinExistence type="inferred from homology"/>
<reference key="1">
    <citation type="submission" date="1996-08" db="EMBL/GenBank/DDBJ databases">
        <title>Evolution of the partitioning and global regulation functions of the IncP central control region.</title>
        <authorList>
            <person name="Macartney D.P."/>
            <person name="Williams D.R."/>
            <person name="Stafford T."/>
            <person name="Foster A."/>
            <person name="Thomas C.M."/>
        </authorList>
    </citation>
    <scope>NUCLEOTIDE SEQUENCE [GENOMIC DNA]</scope>
</reference>
<comment type="function">
    <text>In conjunction with KorA, inhibits the transcription of the kilA, trfA and korAB operons. Is also involved in the negative control of the kilB operon.</text>
</comment>
<comment type="similarity">
    <text evidence="2">Belongs to the ParB family.</text>
</comment>
<accession>Q52313</accession>
<accession>P71174</accession>
<protein>
    <recommendedName>
        <fullName>Transcriptional repressor protein KorB</fullName>
    </recommendedName>
</protein>